<comment type="domain">
    <text>The protein kinase domain is predicted to be catalytically inactive.</text>
</comment>
<comment type="sequence caution" evidence="3">
    <conflict type="erroneous gene model prediction">
        <sequence resource="EMBL-CDS" id="EFJ20033"/>
    </conflict>
    <text>The predicted gene has been split into 2 genes.</text>
</comment>
<gene>
    <name type="ORF">SELMODRAFT_444075</name>
</gene>
<sequence>MVMEKLRKIHDLKKVHTTLEILQFARRGVIPSEAKRFRATWVVLDRNLKSEGKLCLQELNSNIVVVHRSNPKILRLNLKRRDLPYDEEESIDSSSVLLNGLSLSVMPKGFDQLYWESSTSSSEASSPDSRLVTAPKFELSVLEELLKNETRRKGPSPSEVLNSTTSSPASHKPQVLNDFLRMKESREYTEETDTQRNVSRPVDRVSSVRKQIHLRKQSSPQPPPLCSICQHKTPVFGKPPRKFTFAELQLATGGFSDVNFLAEGGYGSVYRGRLPDGQAVAVKQHKLASTQGDKEFCAEVEVLSCAQQRNLVMLIGYCAEDKKRLLVYEFVCNGSLDSHLYGRRSKTVGDFGLARWQPNGELGVETRVIGAFGYLAPEYTQTGQITEKADVYSFGIVLLELVSGRKAVDLSRNKGEMCLSEWARPFLREQKYEKLIDQRLRGRFCVNEVENMLLAATLCIDPDPLIRPRMSQVLRLLEGDSLSDTSLSSSSSGLLNGSPVSILLIGDLSQDSSSSRSSSASSVLKSFSRTQHSSRSSSNAGSPLNPAATQALAFKKYNKNTTRHTQD</sequence>
<feature type="chain" id="PRO_0000412059" description="Inactive protein kinase SELMODRAFT_444075">
    <location>
        <begin position="1"/>
        <end position="567"/>
    </location>
</feature>
<feature type="domain" description="Protein kinase" evidence="1">
    <location>
        <begin position="255"/>
        <end position="487"/>
    </location>
</feature>
<feature type="region of interest" description="Disordered" evidence="2">
    <location>
        <begin position="148"/>
        <end position="206"/>
    </location>
</feature>
<feature type="region of interest" description="Disordered" evidence="2">
    <location>
        <begin position="511"/>
        <end position="567"/>
    </location>
</feature>
<feature type="compositionally biased region" description="Polar residues" evidence="2">
    <location>
        <begin position="159"/>
        <end position="169"/>
    </location>
</feature>
<feature type="compositionally biased region" description="Basic and acidic residues" evidence="2">
    <location>
        <begin position="180"/>
        <end position="189"/>
    </location>
</feature>
<feature type="compositionally biased region" description="Low complexity" evidence="2">
    <location>
        <begin position="196"/>
        <end position="206"/>
    </location>
</feature>
<feature type="compositionally biased region" description="Low complexity" evidence="2">
    <location>
        <begin position="511"/>
        <end position="538"/>
    </location>
</feature>
<feature type="compositionally biased region" description="Basic residues" evidence="2">
    <location>
        <begin position="556"/>
        <end position="567"/>
    </location>
</feature>
<feature type="binding site" evidence="1">
    <location>
        <begin position="261"/>
        <end position="269"/>
    </location>
    <ligand>
        <name>ATP</name>
        <dbReference type="ChEBI" id="CHEBI:30616"/>
    </ligand>
</feature>
<feature type="binding site" evidence="1">
    <location>
        <position position="283"/>
    </location>
    <ligand>
        <name>ATP</name>
        <dbReference type="ChEBI" id="CHEBI:30616"/>
    </ligand>
</feature>
<dbReference type="EMBL" id="GL377604">
    <property type="protein sequence ID" value="EFJ20033.1"/>
    <property type="status" value="ALT_SEQ"/>
    <property type="molecule type" value="Genomic_DNA"/>
</dbReference>
<dbReference type="EMBL" id="FE450848">
    <property type="status" value="NOT_ANNOTATED_CDS"/>
    <property type="molecule type" value="mRNA"/>
</dbReference>
<dbReference type="EMBL" id="FE450849">
    <property type="status" value="NOT_ANNOTATED_CDS"/>
    <property type="molecule type" value="mRNA"/>
</dbReference>
<dbReference type="RefSeq" id="XP_002979076.1">
    <property type="nucleotide sequence ID" value="XM_002979030.1"/>
</dbReference>
<dbReference type="SMR" id="P0DH62"/>
<dbReference type="KEGG" id="smo:SELMODRAFT_444075"/>
<dbReference type="InParanoid" id="P0DH62"/>
<dbReference type="Proteomes" id="UP000001514">
    <property type="component" value="Unassembled WGS sequence"/>
</dbReference>
<dbReference type="GO" id="GO:0005524">
    <property type="term" value="F:ATP binding"/>
    <property type="evidence" value="ECO:0007669"/>
    <property type="project" value="UniProtKB-KW"/>
</dbReference>
<dbReference type="GO" id="GO:0004672">
    <property type="term" value="F:protein kinase activity"/>
    <property type="evidence" value="ECO:0007669"/>
    <property type="project" value="InterPro"/>
</dbReference>
<dbReference type="FunFam" id="3.30.200.20:FF:000162">
    <property type="entry name" value="Adenine nucleotide alpha hydrolase-like domain kinase"/>
    <property type="match status" value="1"/>
</dbReference>
<dbReference type="Gene3D" id="3.30.200.20">
    <property type="entry name" value="Phosphorylase Kinase, domain 1"/>
    <property type="match status" value="1"/>
</dbReference>
<dbReference type="Gene3D" id="1.10.510.10">
    <property type="entry name" value="Transferase(Phosphotransferase) domain 1"/>
    <property type="match status" value="1"/>
</dbReference>
<dbReference type="InterPro" id="IPR011009">
    <property type="entry name" value="Kinase-like_dom_sf"/>
</dbReference>
<dbReference type="InterPro" id="IPR000719">
    <property type="entry name" value="Prot_kinase_dom"/>
</dbReference>
<dbReference type="InterPro" id="IPR001245">
    <property type="entry name" value="Ser-Thr/Tyr_kinase_cat_dom"/>
</dbReference>
<dbReference type="PANTHER" id="PTHR47989:SF37">
    <property type="entry name" value="INACTIVE PROTEIN KINASE SELMODRAFT_444075"/>
    <property type="match status" value="1"/>
</dbReference>
<dbReference type="PANTHER" id="PTHR47989">
    <property type="entry name" value="OS01G0750732 PROTEIN"/>
    <property type="match status" value="1"/>
</dbReference>
<dbReference type="Pfam" id="PF07714">
    <property type="entry name" value="PK_Tyr_Ser-Thr"/>
    <property type="match status" value="2"/>
</dbReference>
<dbReference type="SUPFAM" id="SSF56112">
    <property type="entry name" value="Protein kinase-like (PK-like)"/>
    <property type="match status" value="1"/>
</dbReference>
<dbReference type="PROSITE" id="PS50011">
    <property type="entry name" value="PROTEIN_KINASE_DOM"/>
    <property type="match status" value="1"/>
</dbReference>
<name>Y4407_SELML</name>
<proteinExistence type="evidence at transcript level"/>
<organism>
    <name type="scientific">Selaginella moellendorffii</name>
    <name type="common">Spikemoss</name>
    <dbReference type="NCBI Taxonomy" id="88036"/>
    <lineage>
        <taxon>Eukaryota</taxon>
        <taxon>Viridiplantae</taxon>
        <taxon>Streptophyta</taxon>
        <taxon>Embryophyta</taxon>
        <taxon>Tracheophyta</taxon>
        <taxon>Lycopodiopsida</taxon>
        <taxon>Selaginellales</taxon>
        <taxon>Selaginellaceae</taxon>
        <taxon>Selaginella</taxon>
    </lineage>
</organism>
<accession>P0DH62</accession>
<accession>D8S6A6</accession>
<keyword id="KW-0067">ATP-binding</keyword>
<keyword id="KW-0547">Nucleotide-binding</keyword>
<keyword id="KW-1185">Reference proteome</keyword>
<protein>
    <recommendedName>
        <fullName>Inactive protein kinase SELMODRAFT_444075</fullName>
    </recommendedName>
</protein>
<evidence type="ECO:0000255" key="1">
    <source>
        <dbReference type="PROSITE-ProRule" id="PRU00159"/>
    </source>
</evidence>
<evidence type="ECO:0000256" key="2">
    <source>
        <dbReference type="SAM" id="MobiDB-lite"/>
    </source>
</evidence>
<evidence type="ECO:0000305" key="3"/>
<reference key="1">
    <citation type="journal article" date="2011" name="Science">
        <title>The Selaginella genome identifies genetic changes associated with the evolution of vascular plants.</title>
        <authorList>
            <person name="Banks J.A."/>
            <person name="Nishiyama T."/>
            <person name="Hasebe M."/>
            <person name="Bowman J.L."/>
            <person name="Gribskov M."/>
            <person name="dePamphilis C."/>
            <person name="Albert V.A."/>
            <person name="Aono N."/>
            <person name="Aoyama T."/>
            <person name="Ambrose B.A."/>
            <person name="Ashton N.W."/>
            <person name="Axtell M.J."/>
            <person name="Barker E."/>
            <person name="Barker M.S."/>
            <person name="Bennetzen J.L."/>
            <person name="Bonawitz N.D."/>
            <person name="Chapple C."/>
            <person name="Cheng C."/>
            <person name="Correa L.G."/>
            <person name="Dacre M."/>
            <person name="DeBarry J."/>
            <person name="Dreyer I."/>
            <person name="Elias M."/>
            <person name="Engstrom E.M."/>
            <person name="Estelle M."/>
            <person name="Feng L."/>
            <person name="Finet C."/>
            <person name="Floyd S.K."/>
            <person name="Frommer W.B."/>
            <person name="Fujita T."/>
            <person name="Gramzow L."/>
            <person name="Gutensohn M."/>
            <person name="Harholt J."/>
            <person name="Hattori M."/>
            <person name="Heyl A."/>
            <person name="Hirai T."/>
            <person name="Hiwatashi Y."/>
            <person name="Ishikawa M."/>
            <person name="Iwata M."/>
            <person name="Karol K.G."/>
            <person name="Koehler B."/>
            <person name="Kolukisaoglu U."/>
            <person name="Kubo M."/>
            <person name="Kurata T."/>
            <person name="Lalonde S."/>
            <person name="Li K."/>
            <person name="Li Y."/>
            <person name="Litt A."/>
            <person name="Lyons E."/>
            <person name="Manning G."/>
            <person name="Maruyama T."/>
            <person name="Michael T.P."/>
            <person name="Mikami K."/>
            <person name="Miyazaki S."/>
            <person name="Morinaga S."/>
            <person name="Murata T."/>
            <person name="Mueller-Roeber B."/>
            <person name="Nelson D.R."/>
            <person name="Obara M."/>
            <person name="Oguri Y."/>
            <person name="Olmstead R.G."/>
            <person name="Onodera N."/>
            <person name="Petersen B.L."/>
            <person name="Pils B."/>
            <person name="Prigge M."/>
            <person name="Rensing S.A."/>
            <person name="Riano-Pachon D.M."/>
            <person name="Roberts A.W."/>
            <person name="Sato Y."/>
            <person name="Scheller H.V."/>
            <person name="Schulz B."/>
            <person name="Schulz C."/>
            <person name="Shakirov E.V."/>
            <person name="Shibagaki N."/>
            <person name="Shinohara N."/>
            <person name="Shippen D.E."/>
            <person name="Soerensen I."/>
            <person name="Sotooka R."/>
            <person name="Sugimoto N."/>
            <person name="Sugita M."/>
            <person name="Sumikawa N."/>
            <person name="Tanurdzic M."/>
            <person name="Theissen G."/>
            <person name="Ulvskov P."/>
            <person name="Wakazuki S."/>
            <person name="Weng J.K."/>
            <person name="Willats W.W."/>
            <person name="Wipf D."/>
            <person name="Wolf P.G."/>
            <person name="Yang L."/>
            <person name="Zimmer A.D."/>
            <person name="Zhu Q."/>
            <person name="Mitros T."/>
            <person name="Hellsten U."/>
            <person name="Loque D."/>
            <person name="Otillar R."/>
            <person name="Salamov A."/>
            <person name="Schmutz J."/>
            <person name="Shapiro H."/>
            <person name="Lindquist E."/>
            <person name="Lucas S."/>
            <person name="Rokhsar D."/>
            <person name="Grigoriev I.V."/>
        </authorList>
    </citation>
    <scope>NUCLEOTIDE SEQUENCE [LARGE SCALE GENOMIC DNA]</scope>
</reference>
<reference key="2">
    <citation type="submission" date="2008-03" db="EMBL/GenBank/DDBJ databases">
        <title>DOE Joint Genome Institute Selaginella moellendorffii EST project.</title>
        <authorList>
            <person name="Richardson P."/>
            <person name="Lucas S."/>
            <person name="Rokhsar D."/>
            <person name="Wang M."/>
            <person name="Lindquist E.A."/>
        </authorList>
    </citation>
    <scope>NUCLEOTIDE SEQUENCE [LARGE SCALE MRNA] OF 39-286 AND 348-567</scope>
</reference>